<keyword id="KW-0240">DNA-directed RNA polymerase</keyword>
<keyword id="KW-0548">Nucleotidyltransferase</keyword>
<keyword id="KW-0804">Transcription</keyword>
<keyword id="KW-0808">Transferase</keyword>
<reference key="1">
    <citation type="submission" date="2009-03" db="EMBL/GenBank/DDBJ databases">
        <title>Brucella melitensis ATCC 23457 whole genome shotgun sequencing project.</title>
        <authorList>
            <person name="Setubal J.C."/>
            <person name="Boyle S."/>
            <person name="Crasta O.R."/>
            <person name="Gillespie J.J."/>
            <person name="Kenyon R.W."/>
            <person name="Lu J."/>
            <person name="Mane S."/>
            <person name="Nagrani S."/>
            <person name="Shallom J.M."/>
            <person name="Shallom S."/>
            <person name="Shukla M."/>
            <person name="Snyder E.E."/>
            <person name="Sobral B.W."/>
            <person name="Wattam A.R."/>
            <person name="Will R."/>
            <person name="Williams K."/>
            <person name="Yoo H."/>
            <person name="Munk C."/>
            <person name="Tapia R."/>
            <person name="Han C."/>
            <person name="Detter J.C."/>
            <person name="Bruce D."/>
            <person name="Brettin T.S."/>
        </authorList>
    </citation>
    <scope>NUCLEOTIDE SEQUENCE [LARGE SCALE GENOMIC DNA]</scope>
    <source>
        <strain>ATCC 23457</strain>
    </source>
</reference>
<feature type="chain" id="PRO_1000196628" description="DNA-directed RNA polymerase subunit alpha">
    <location>
        <begin position="1"/>
        <end position="337"/>
    </location>
</feature>
<feature type="region of interest" description="Alpha N-terminal domain (alpha-NTD)" evidence="1">
    <location>
        <begin position="1"/>
        <end position="233"/>
    </location>
</feature>
<feature type="region of interest" description="Alpha C-terminal domain (alpha-CTD)" evidence="1">
    <location>
        <begin position="249"/>
        <end position="337"/>
    </location>
</feature>
<dbReference type="EC" id="2.7.7.6" evidence="1"/>
<dbReference type="EMBL" id="CP001488">
    <property type="protein sequence ID" value="ACO00984.1"/>
    <property type="molecule type" value="Genomic_DNA"/>
</dbReference>
<dbReference type="RefSeq" id="WP_004683917.1">
    <property type="nucleotide sequence ID" value="NC_012441.1"/>
</dbReference>
<dbReference type="SMR" id="C0RJH6"/>
<dbReference type="KEGG" id="bmi:BMEA_A1253"/>
<dbReference type="HOGENOM" id="CLU_053084_0_0_5"/>
<dbReference type="PRO" id="PR:C0RJH6"/>
<dbReference type="Proteomes" id="UP000001748">
    <property type="component" value="Chromosome I"/>
</dbReference>
<dbReference type="GO" id="GO:0005737">
    <property type="term" value="C:cytoplasm"/>
    <property type="evidence" value="ECO:0007669"/>
    <property type="project" value="UniProtKB-ARBA"/>
</dbReference>
<dbReference type="GO" id="GO:0000428">
    <property type="term" value="C:DNA-directed RNA polymerase complex"/>
    <property type="evidence" value="ECO:0007669"/>
    <property type="project" value="UniProtKB-KW"/>
</dbReference>
<dbReference type="GO" id="GO:0003677">
    <property type="term" value="F:DNA binding"/>
    <property type="evidence" value="ECO:0007669"/>
    <property type="project" value="UniProtKB-UniRule"/>
</dbReference>
<dbReference type="GO" id="GO:0003899">
    <property type="term" value="F:DNA-directed RNA polymerase activity"/>
    <property type="evidence" value="ECO:0007669"/>
    <property type="project" value="UniProtKB-UniRule"/>
</dbReference>
<dbReference type="GO" id="GO:0046983">
    <property type="term" value="F:protein dimerization activity"/>
    <property type="evidence" value="ECO:0007669"/>
    <property type="project" value="InterPro"/>
</dbReference>
<dbReference type="GO" id="GO:0006351">
    <property type="term" value="P:DNA-templated transcription"/>
    <property type="evidence" value="ECO:0007669"/>
    <property type="project" value="UniProtKB-UniRule"/>
</dbReference>
<dbReference type="CDD" id="cd06928">
    <property type="entry name" value="RNAP_alpha_NTD"/>
    <property type="match status" value="1"/>
</dbReference>
<dbReference type="FunFam" id="1.10.150.20:FF:000001">
    <property type="entry name" value="DNA-directed RNA polymerase subunit alpha"/>
    <property type="match status" value="1"/>
</dbReference>
<dbReference type="FunFam" id="2.170.120.12:FF:000001">
    <property type="entry name" value="DNA-directed RNA polymerase subunit alpha"/>
    <property type="match status" value="1"/>
</dbReference>
<dbReference type="Gene3D" id="1.10.150.20">
    <property type="entry name" value="5' to 3' exonuclease, C-terminal subdomain"/>
    <property type="match status" value="1"/>
</dbReference>
<dbReference type="Gene3D" id="2.170.120.12">
    <property type="entry name" value="DNA-directed RNA polymerase, insert domain"/>
    <property type="match status" value="1"/>
</dbReference>
<dbReference type="Gene3D" id="3.30.1360.10">
    <property type="entry name" value="RNA polymerase, RBP11-like subunit"/>
    <property type="match status" value="1"/>
</dbReference>
<dbReference type="HAMAP" id="MF_00059">
    <property type="entry name" value="RNApol_bact_RpoA"/>
    <property type="match status" value="1"/>
</dbReference>
<dbReference type="InterPro" id="IPR011262">
    <property type="entry name" value="DNA-dir_RNA_pol_insert"/>
</dbReference>
<dbReference type="InterPro" id="IPR011263">
    <property type="entry name" value="DNA-dir_RNA_pol_RpoA/D/Rpb3"/>
</dbReference>
<dbReference type="InterPro" id="IPR011773">
    <property type="entry name" value="DNA-dir_RpoA"/>
</dbReference>
<dbReference type="InterPro" id="IPR036603">
    <property type="entry name" value="RBP11-like"/>
</dbReference>
<dbReference type="InterPro" id="IPR011260">
    <property type="entry name" value="RNAP_asu_C"/>
</dbReference>
<dbReference type="InterPro" id="IPR036643">
    <property type="entry name" value="RNApol_insert_sf"/>
</dbReference>
<dbReference type="NCBIfam" id="NF003513">
    <property type="entry name" value="PRK05182.1-2"/>
    <property type="match status" value="1"/>
</dbReference>
<dbReference type="NCBIfam" id="NF003519">
    <property type="entry name" value="PRK05182.2-5"/>
    <property type="match status" value="1"/>
</dbReference>
<dbReference type="NCBIfam" id="TIGR02027">
    <property type="entry name" value="rpoA"/>
    <property type="match status" value="1"/>
</dbReference>
<dbReference type="Pfam" id="PF01000">
    <property type="entry name" value="RNA_pol_A_bac"/>
    <property type="match status" value="1"/>
</dbReference>
<dbReference type="Pfam" id="PF03118">
    <property type="entry name" value="RNA_pol_A_CTD"/>
    <property type="match status" value="1"/>
</dbReference>
<dbReference type="Pfam" id="PF01193">
    <property type="entry name" value="RNA_pol_L"/>
    <property type="match status" value="1"/>
</dbReference>
<dbReference type="SMART" id="SM00662">
    <property type="entry name" value="RPOLD"/>
    <property type="match status" value="1"/>
</dbReference>
<dbReference type="SUPFAM" id="SSF47789">
    <property type="entry name" value="C-terminal domain of RNA polymerase alpha subunit"/>
    <property type="match status" value="1"/>
</dbReference>
<dbReference type="SUPFAM" id="SSF56553">
    <property type="entry name" value="Insert subdomain of RNA polymerase alpha subunit"/>
    <property type="match status" value="1"/>
</dbReference>
<dbReference type="SUPFAM" id="SSF55257">
    <property type="entry name" value="RBP11-like subunits of RNA polymerase"/>
    <property type="match status" value="1"/>
</dbReference>
<organism>
    <name type="scientific">Brucella melitensis biotype 2 (strain ATCC 23457)</name>
    <dbReference type="NCBI Taxonomy" id="546272"/>
    <lineage>
        <taxon>Bacteria</taxon>
        <taxon>Pseudomonadati</taxon>
        <taxon>Pseudomonadota</taxon>
        <taxon>Alphaproteobacteria</taxon>
        <taxon>Hyphomicrobiales</taxon>
        <taxon>Brucellaceae</taxon>
        <taxon>Brucella/Ochrobactrum group</taxon>
        <taxon>Brucella</taxon>
    </lineage>
</organism>
<protein>
    <recommendedName>
        <fullName evidence="1">DNA-directed RNA polymerase subunit alpha</fullName>
        <shortName evidence="1">RNAP subunit alpha</shortName>
        <ecNumber evidence="1">2.7.7.6</ecNumber>
    </recommendedName>
    <alternativeName>
        <fullName evidence="1">RNA polymerase subunit alpha</fullName>
    </alternativeName>
    <alternativeName>
        <fullName evidence="1">Transcriptase subunit alpha</fullName>
    </alternativeName>
</protein>
<gene>
    <name evidence="1" type="primary">rpoA</name>
    <name type="ordered locus">BMEA_A1253</name>
</gene>
<comment type="function">
    <text evidence="1">DNA-dependent RNA polymerase catalyzes the transcription of DNA into RNA using the four ribonucleoside triphosphates as substrates.</text>
</comment>
<comment type="catalytic activity">
    <reaction evidence="1">
        <text>RNA(n) + a ribonucleoside 5'-triphosphate = RNA(n+1) + diphosphate</text>
        <dbReference type="Rhea" id="RHEA:21248"/>
        <dbReference type="Rhea" id="RHEA-COMP:14527"/>
        <dbReference type="Rhea" id="RHEA-COMP:17342"/>
        <dbReference type="ChEBI" id="CHEBI:33019"/>
        <dbReference type="ChEBI" id="CHEBI:61557"/>
        <dbReference type="ChEBI" id="CHEBI:140395"/>
        <dbReference type="EC" id="2.7.7.6"/>
    </reaction>
</comment>
<comment type="subunit">
    <text evidence="1">Homodimer. The RNAP catalytic core consists of 2 alpha, 1 beta, 1 beta' and 1 omega subunit. When a sigma factor is associated with the core the holoenzyme is formed, which can initiate transcription.</text>
</comment>
<comment type="domain">
    <text evidence="1">The N-terminal domain is essential for RNAP assembly and basal transcription, whereas the C-terminal domain is involved in interaction with transcriptional regulators and with upstream promoter elements.</text>
</comment>
<comment type="similarity">
    <text evidence="1">Belongs to the RNA polymerase alpha chain family.</text>
</comment>
<proteinExistence type="inferred from homology"/>
<evidence type="ECO:0000255" key="1">
    <source>
        <dbReference type="HAMAP-Rule" id="MF_00059"/>
    </source>
</evidence>
<accession>C0RJH6</accession>
<sequence length="337" mass="37313">MIQKNWQELIKPNKVDFITHGSRTHATVVAEPLERGFGLTLGNALRRVLLSSLRGAAVTAVQIDGVLHEFSSIPGVREDVTDIVLNIKEIAIRMEGEGPKRMVVHKEGPGVVTAGDIQTVGDVEILNPEHVICTLDEGAEIRMEFTVNTGKGYVPADCNRAEDAPIGLIPVDSLYSPVRKVSYKIENTREGQVLDYDKLTLNIETNGSVTGEDAVAYAARILQDQLSIFVNFEEPQKEAPQEQVAELAFNPALLKKVDELELSVRSANCLKNDNIVYIGDLIQKTEAEMLRTPNFGRKSLNEIKEVLASMGLHLGMEIPAWPPENIEDLAKRYEDQY</sequence>
<name>RPOA_BRUMB</name>